<feature type="chain" id="PRO_0000240884" description="Armadillo repeat-containing protein 1">
    <location>
        <begin position="1"/>
        <end position="282"/>
    </location>
</feature>
<feature type="repeat" description="ARM">
    <location>
        <begin position="39"/>
        <end position="81"/>
    </location>
</feature>
<feature type="region of interest" description="Disordered" evidence="3">
    <location>
        <begin position="239"/>
        <end position="261"/>
    </location>
</feature>
<feature type="compositionally biased region" description="Basic and acidic residues" evidence="3">
    <location>
        <begin position="246"/>
        <end position="255"/>
    </location>
</feature>
<feature type="modified residue" description="N-acetylmethionine" evidence="2">
    <location>
        <position position="1"/>
    </location>
</feature>
<feature type="modified residue" description="Phosphothreonine" evidence="2">
    <location>
        <position position="137"/>
    </location>
</feature>
<feature type="modified residue" description="Phosphoserine" evidence="2">
    <location>
        <position position="189"/>
    </location>
</feature>
<feature type="modified residue" description="Phosphoserine" evidence="1">
    <location>
        <position position="246"/>
    </location>
</feature>
<feature type="modified residue" description="Phosphoserine" evidence="2">
    <location>
        <position position="260"/>
    </location>
</feature>
<feature type="modified residue" description="Phosphoserine" evidence="1">
    <location>
        <position position="267"/>
    </location>
</feature>
<comment type="function">
    <text evidence="2">In association with mitochondrial contact site and cristae organizing system (MICOS) complex components and mitochondrial outer membrane sorting assembly machinery (SAM) complex components may regulate mitochondrial dynamics playing a role in determining mitochondrial length, distribution and motility.</text>
</comment>
<comment type="subunit">
    <text evidence="2">Interacts with mitochondrial contact site and cristae organizing system (MICOS) complex components IMMT/MIC60 and MICOS10/MIC10 (By similarity). Interacts with mitochondrial outer membrane sorting assembly machinery (SAM) complex components SAMM50 and MTX1 (By similarity).</text>
</comment>
<comment type="subcellular location">
    <subcellularLocation>
        <location evidence="2">Cytoplasm</location>
    </subcellularLocation>
    <subcellularLocation>
        <location evidence="2">Mitochondrion</location>
    </subcellularLocation>
    <subcellularLocation>
        <location evidence="2">Mitochondrion outer membrane</location>
    </subcellularLocation>
    <text evidence="2">Associates with the outer mitochondrion membrane, most likely through its C-terminus (By similarity). Not integrated into the mitochondrial outer membrane (By similarity).</text>
</comment>
<dbReference type="EMBL" id="CR858201">
    <property type="protein sequence ID" value="CAH90439.1"/>
    <property type="molecule type" value="mRNA"/>
</dbReference>
<dbReference type="RefSeq" id="NP_001125221.1">
    <property type="nucleotide sequence ID" value="NM_001131749.1"/>
</dbReference>
<dbReference type="SMR" id="Q5RCR8"/>
<dbReference type="FunCoup" id="Q5RCR8">
    <property type="interactions" value="3389"/>
</dbReference>
<dbReference type="STRING" id="9601.ENSPPYP00000020895"/>
<dbReference type="GeneID" id="100172114"/>
<dbReference type="KEGG" id="pon:100172114"/>
<dbReference type="CTD" id="55156"/>
<dbReference type="eggNOG" id="ENOG502QU5Q">
    <property type="taxonomic scope" value="Eukaryota"/>
</dbReference>
<dbReference type="InParanoid" id="Q5RCR8"/>
<dbReference type="OrthoDB" id="17335at2759"/>
<dbReference type="Proteomes" id="UP000001595">
    <property type="component" value="Unplaced"/>
</dbReference>
<dbReference type="GO" id="GO:0005741">
    <property type="term" value="C:mitochondrial outer membrane"/>
    <property type="evidence" value="ECO:0007669"/>
    <property type="project" value="UniProtKB-SubCell"/>
</dbReference>
<dbReference type="GO" id="GO:0046872">
    <property type="term" value="F:metal ion binding"/>
    <property type="evidence" value="ECO:0007669"/>
    <property type="project" value="InterPro"/>
</dbReference>
<dbReference type="FunFam" id="1.25.10.10:FF:000365">
    <property type="entry name" value="Armadillo repeat-containing protein 1"/>
    <property type="match status" value="1"/>
</dbReference>
<dbReference type="Gene3D" id="1.25.10.10">
    <property type="entry name" value="Leucine-rich Repeat Variant"/>
    <property type="match status" value="1"/>
</dbReference>
<dbReference type="InterPro" id="IPR011989">
    <property type="entry name" value="ARM-like"/>
</dbReference>
<dbReference type="InterPro" id="IPR016024">
    <property type="entry name" value="ARM-type_fold"/>
</dbReference>
<dbReference type="InterPro" id="IPR016617">
    <property type="entry name" value="ARMC1"/>
</dbReference>
<dbReference type="InterPro" id="IPR036163">
    <property type="entry name" value="HMA_dom_sf"/>
</dbReference>
<dbReference type="PANTHER" id="PTHR46840">
    <property type="entry name" value="ARMADILLO REPEAT-CONTAINING PROTEIN 1"/>
    <property type="match status" value="1"/>
</dbReference>
<dbReference type="PANTHER" id="PTHR46840:SF1">
    <property type="entry name" value="ARMADILLO REPEAT-CONTAINING PROTEIN 1"/>
    <property type="match status" value="1"/>
</dbReference>
<dbReference type="PIRSF" id="PIRSF013899">
    <property type="entry name" value="UCP013899"/>
    <property type="match status" value="1"/>
</dbReference>
<dbReference type="SUPFAM" id="SSF48371">
    <property type="entry name" value="ARM repeat"/>
    <property type="match status" value="1"/>
</dbReference>
<dbReference type="SUPFAM" id="SSF55008">
    <property type="entry name" value="HMA, heavy metal-associated domain"/>
    <property type="match status" value="1"/>
</dbReference>
<proteinExistence type="evidence at transcript level"/>
<sequence length="282" mass="31221">MNSSTSTMSEEPDALSVVNQLRDLAADPLNRRAIVQDQGCLPGLILSMDHPNPPVVHSALLALRYLAECRANREKMKGELGMMLSLQNVIQKTTTPGETKLLASEIYDILQSSNMADGDSFNEMNSRRRKAQFFLGTTNKRAKTVVLHIDGLDDTSRRNLCEEALLKIKGVISFTFQMAVQRCVVRIRSDLKAEALASAIASTKVMKAQQVVKSESGEEMLVPFQDTPVEVEQNTELPDYLPEDESPTKEQDKAVSRVGSHPEGGASWLSTAANFLSRSFYW</sequence>
<protein>
    <recommendedName>
        <fullName>Armadillo repeat-containing protein 1</fullName>
    </recommendedName>
</protein>
<gene>
    <name type="primary">ARMC1</name>
</gene>
<keyword id="KW-0007">Acetylation</keyword>
<keyword id="KW-0963">Cytoplasm</keyword>
<keyword id="KW-0472">Membrane</keyword>
<keyword id="KW-0496">Mitochondrion</keyword>
<keyword id="KW-1000">Mitochondrion outer membrane</keyword>
<keyword id="KW-0597">Phosphoprotein</keyword>
<keyword id="KW-1185">Reference proteome</keyword>
<organism>
    <name type="scientific">Pongo abelii</name>
    <name type="common">Sumatran orangutan</name>
    <name type="synonym">Pongo pygmaeus abelii</name>
    <dbReference type="NCBI Taxonomy" id="9601"/>
    <lineage>
        <taxon>Eukaryota</taxon>
        <taxon>Metazoa</taxon>
        <taxon>Chordata</taxon>
        <taxon>Craniata</taxon>
        <taxon>Vertebrata</taxon>
        <taxon>Euteleostomi</taxon>
        <taxon>Mammalia</taxon>
        <taxon>Eutheria</taxon>
        <taxon>Euarchontoglires</taxon>
        <taxon>Primates</taxon>
        <taxon>Haplorrhini</taxon>
        <taxon>Catarrhini</taxon>
        <taxon>Hominidae</taxon>
        <taxon>Pongo</taxon>
    </lineage>
</organism>
<name>ARMC1_PONAB</name>
<evidence type="ECO:0000250" key="1">
    <source>
        <dbReference type="UniProtKB" id="Q9D7A8"/>
    </source>
</evidence>
<evidence type="ECO:0000250" key="2">
    <source>
        <dbReference type="UniProtKB" id="Q9NVT9"/>
    </source>
</evidence>
<evidence type="ECO:0000256" key="3">
    <source>
        <dbReference type="SAM" id="MobiDB-lite"/>
    </source>
</evidence>
<accession>Q5RCR8</accession>
<reference key="1">
    <citation type="submission" date="2004-11" db="EMBL/GenBank/DDBJ databases">
        <authorList>
            <consortium name="The German cDNA consortium"/>
        </authorList>
    </citation>
    <scope>NUCLEOTIDE SEQUENCE [LARGE SCALE MRNA]</scope>
    <source>
        <tissue>Kidney</tissue>
    </source>
</reference>